<gene>
    <name type="primary">gmhB2</name>
    <name type="synonym">wblZ</name>
    <name type="ordered locus">plu4825</name>
</gene>
<keyword id="KW-0119">Carbohydrate metabolism</keyword>
<keyword id="KW-0963">Cytoplasm</keyword>
<keyword id="KW-0378">Hydrolase</keyword>
<keyword id="KW-0479">Metal-binding</keyword>
<keyword id="KW-1185">Reference proteome</keyword>
<keyword id="KW-0862">Zinc</keyword>
<dbReference type="EC" id="3.1.3.83"/>
<dbReference type="EMBL" id="BX571875">
    <property type="protein sequence ID" value="CAE17197.1"/>
    <property type="molecule type" value="Genomic_DNA"/>
</dbReference>
<dbReference type="RefSeq" id="WP_011148888.1">
    <property type="nucleotide sequence ID" value="NC_005126.1"/>
</dbReference>
<dbReference type="SMR" id="Q7MY63"/>
<dbReference type="STRING" id="243265.plu4825"/>
<dbReference type="GeneID" id="48851057"/>
<dbReference type="KEGG" id="plu:plu4825"/>
<dbReference type="eggNOG" id="COG0241">
    <property type="taxonomic scope" value="Bacteria"/>
</dbReference>
<dbReference type="HOGENOM" id="CLU_085077_3_0_6"/>
<dbReference type="OrthoDB" id="9781367at2"/>
<dbReference type="UniPathway" id="UPA00543">
    <property type="reaction ID" value="UER00607"/>
</dbReference>
<dbReference type="Proteomes" id="UP000002514">
    <property type="component" value="Chromosome"/>
</dbReference>
<dbReference type="GO" id="GO:0005737">
    <property type="term" value="C:cytoplasm"/>
    <property type="evidence" value="ECO:0007669"/>
    <property type="project" value="UniProtKB-SubCell"/>
</dbReference>
<dbReference type="GO" id="GO:0046872">
    <property type="term" value="F:metal ion binding"/>
    <property type="evidence" value="ECO:0007669"/>
    <property type="project" value="UniProtKB-KW"/>
</dbReference>
<dbReference type="GO" id="GO:0016791">
    <property type="term" value="F:phosphatase activity"/>
    <property type="evidence" value="ECO:0007669"/>
    <property type="project" value="InterPro"/>
</dbReference>
<dbReference type="GO" id="GO:0005975">
    <property type="term" value="P:carbohydrate metabolic process"/>
    <property type="evidence" value="ECO:0007669"/>
    <property type="project" value="InterPro"/>
</dbReference>
<dbReference type="CDD" id="cd07503">
    <property type="entry name" value="HAD_HisB-N"/>
    <property type="match status" value="1"/>
</dbReference>
<dbReference type="FunFam" id="3.40.50.1000:FF:000037">
    <property type="entry name" value="D,D-heptose 1,7-bisphosphate phosphatase"/>
    <property type="match status" value="1"/>
</dbReference>
<dbReference type="Gene3D" id="3.40.50.1000">
    <property type="entry name" value="HAD superfamily/HAD-like"/>
    <property type="match status" value="1"/>
</dbReference>
<dbReference type="InterPro" id="IPR036412">
    <property type="entry name" value="HAD-like_sf"/>
</dbReference>
<dbReference type="InterPro" id="IPR006549">
    <property type="entry name" value="HAD-SF_hydro_IIIA"/>
</dbReference>
<dbReference type="InterPro" id="IPR023214">
    <property type="entry name" value="HAD_sf"/>
</dbReference>
<dbReference type="InterPro" id="IPR004446">
    <property type="entry name" value="Heptose_bisP_phosphatase"/>
</dbReference>
<dbReference type="InterPro" id="IPR006543">
    <property type="entry name" value="Histidinol-phos"/>
</dbReference>
<dbReference type="NCBIfam" id="TIGR00213">
    <property type="entry name" value="GmhB_yaeD"/>
    <property type="match status" value="1"/>
</dbReference>
<dbReference type="NCBIfam" id="TIGR01662">
    <property type="entry name" value="HAD-SF-IIIA"/>
    <property type="match status" value="1"/>
</dbReference>
<dbReference type="NCBIfam" id="TIGR01656">
    <property type="entry name" value="Histidinol-ppas"/>
    <property type="match status" value="1"/>
</dbReference>
<dbReference type="PANTHER" id="PTHR42891">
    <property type="entry name" value="D-GLYCERO-BETA-D-MANNO-HEPTOSE-1,7-BISPHOSPHATE 7-PHOSPHATASE"/>
    <property type="match status" value="1"/>
</dbReference>
<dbReference type="PANTHER" id="PTHR42891:SF1">
    <property type="entry name" value="D-GLYCERO-BETA-D-MANNO-HEPTOSE-1,7-BISPHOSPHATE 7-PHOSPHATASE"/>
    <property type="match status" value="1"/>
</dbReference>
<dbReference type="Pfam" id="PF13242">
    <property type="entry name" value="Hydrolase_like"/>
    <property type="match status" value="1"/>
</dbReference>
<dbReference type="PIRSF" id="PIRSF004682">
    <property type="entry name" value="GmhB"/>
    <property type="match status" value="1"/>
</dbReference>
<dbReference type="SUPFAM" id="SSF56784">
    <property type="entry name" value="HAD-like"/>
    <property type="match status" value="1"/>
</dbReference>
<organism>
    <name type="scientific">Photorhabdus laumondii subsp. laumondii (strain DSM 15139 / CIP 105565 / TT01)</name>
    <name type="common">Photorhabdus luminescens subsp. laumondii</name>
    <dbReference type="NCBI Taxonomy" id="243265"/>
    <lineage>
        <taxon>Bacteria</taxon>
        <taxon>Pseudomonadati</taxon>
        <taxon>Pseudomonadota</taxon>
        <taxon>Gammaproteobacteria</taxon>
        <taxon>Enterobacterales</taxon>
        <taxon>Morganellaceae</taxon>
        <taxon>Photorhabdus</taxon>
    </lineage>
</organism>
<proteinExistence type="inferred from homology"/>
<sequence>MQHNKIKVAFLDRDGVINKEVNYLHKIEDFEYTSKCIVGLKKIRDLGYEIIIITNQAGIARGYYSEKQYQLLTDWYRNDLKEKGVDILDIFHCPHYPDGIVPELSKDCYCRKPSPGMIEQARKKYSIDIKSSILVGDKNSDIHAGERAGIPRCFLVKTGHPTSEPTENAILSNNLFTISKLIE</sequence>
<name>GMHBA_PHOLL</name>
<protein>
    <recommendedName>
        <fullName>D-glycero-alpha-D-manno-heptose-1,7-bisphosphate 7-phosphatase</fullName>
        <ecNumber>3.1.3.83</ecNumber>
    </recommendedName>
    <alternativeName>
        <fullName>D,D-heptose 1,7-bisphosphate phosphatase</fullName>
        <shortName>HBP phosphatase</shortName>
    </alternativeName>
</protein>
<feature type="chain" id="PRO_0000209402" description="D-glycero-alpha-D-manno-heptose-1,7-bisphosphate 7-phosphatase">
    <location>
        <begin position="1"/>
        <end position="183"/>
    </location>
</feature>
<feature type="binding site" evidence="2">
    <location>
        <position position="93"/>
    </location>
    <ligand>
        <name>Zn(2+)</name>
        <dbReference type="ChEBI" id="CHEBI:29105"/>
    </ligand>
</feature>
<feature type="binding site" evidence="2">
    <location>
        <position position="95"/>
    </location>
    <ligand>
        <name>Zn(2+)</name>
        <dbReference type="ChEBI" id="CHEBI:29105"/>
    </ligand>
</feature>
<feature type="binding site" evidence="2">
    <location>
        <position position="108"/>
    </location>
    <ligand>
        <name>Zn(2+)</name>
        <dbReference type="ChEBI" id="CHEBI:29105"/>
    </ligand>
</feature>
<feature type="binding site" evidence="2">
    <location>
        <position position="110"/>
    </location>
    <ligand>
        <name>Zn(2+)</name>
        <dbReference type="ChEBI" id="CHEBI:29105"/>
    </ligand>
</feature>
<accession>Q7MY63</accession>
<comment type="function">
    <text evidence="1">Converts the D-glycero-alpha-D-manno-heptose 1,7-bisphosphate intermediate into D-glycero-alpha-D-manno-heptose 1-phosphate by removing the phosphate group at the C-7 position.</text>
</comment>
<comment type="catalytic activity">
    <reaction>
        <text>D-glycero-alpha-D-manno-heptose 1,7-bisphosphate + H2O = D-glycero-alpha-D-manno-heptose 1-phosphate + phosphate</text>
        <dbReference type="Rhea" id="RHEA:28522"/>
        <dbReference type="ChEBI" id="CHEBI:15377"/>
        <dbReference type="ChEBI" id="CHEBI:43474"/>
        <dbReference type="ChEBI" id="CHEBI:60207"/>
        <dbReference type="ChEBI" id="CHEBI:61574"/>
        <dbReference type="EC" id="3.1.3.83"/>
    </reaction>
</comment>
<comment type="pathway">
    <text>Nucleotide-sugar biosynthesis; GDP-D-glycero-alpha-D-manno-heptose biosynthesis; GDP-D-glycero-alpha-D-manno-heptose from D-glycero-alpha-D-manno-heptose 7-phosphate: step 2/3.</text>
</comment>
<comment type="subcellular location">
    <subcellularLocation>
        <location evidence="1">Cytoplasm</location>
    </subcellularLocation>
</comment>
<comment type="similarity">
    <text evidence="3">Belongs to the GmhB family.</text>
</comment>
<reference key="1">
    <citation type="journal article" date="2003" name="Nat. Biotechnol.">
        <title>The genome sequence of the entomopathogenic bacterium Photorhabdus luminescens.</title>
        <authorList>
            <person name="Duchaud E."/>
            <person name="Rusniok C."/>
            <person name="Frangeul L."/>
            <person name="Buchrieser C."/>
            <person name="Givaudan A."/>
            <person name="Taourit S."/>
            <person name="Bocs S."/>
            <person name="Boursaux-Eude C."/>
            <person name="Chandler M."/>
            <person name="Charles J.-F."/>
            <person name="Dassa E."/>
            <person name="Derose R."/>
            <person name="Derzelle S."/>
            <person name="Freyssinet G."/>
            <person name="Gaudriault S."/>
            <person name="Medigue C."/>
            <person name="Lanois A."/>
            <person name="Powell K."/>
            <person name="Siguier P."/>
            <person name="Vincent R."/>
            <person name="Wingate V."/>
            <person name="Zouine M."/>
            <person name="Glaser P."/>
            <person name="Boemare N."/>
            <person name="Danchin A."/>
            <person name="Kunst F."/>
        </authorList>
    </citation>
    <scope>NUCLEOTIDE SEQUENCE [LARGE SCALE GENOMIC DNA]</scope>
    <source>
        <strain>DSM 15139 / CIP 105565 / TT01</strain>
    </source>
</reference>
<evidence type="ECO:0000250" key="1"/>
<evidence type="ECO:0000250" key="2">
    <source>
        <dbReference type="UniProtKB" id="Q7WG29"/>
    </source>
</evidence>
<evidence type="ECO:0000305" key="3"/>